<gene>
    <name evidence="1" type="primary">slmA</name>
    <name type="ordered locus">Sbal_0374</name>
</gene>
<comment type="function">
    <text evidence="1">Required for nucleoid occlusion (NO) phenomenon, which prevents Z-ring formation and cell division over the nucleoid. Acts as a DNA-associated cell division inhibitor that binds simultaneously chromosomal DNA and FtsZ, and disrupts the assembly of FtsZ polymers. SlmA-DNA-binding sequences (SBS) are dispersed on non-Ter regions of the chromosome, preventing FtsZ polymerization at these regions.</text>
</comment>
<comment type="subunit">
    <text evidence="1">Homodimer. Interacts with FtsZ.</text>
</comment>
<comment type="subcellular location">
    <subcellularLocation>
        <location evidence="1">Cytoplasm</location>
        <location evidence="1">Nucleoid</location>
    </subcellularLocation>
</comment>
<comment type="similarity">
    <text evidence="1">Belongs to the nucleoid occlusion factor SlmA family.</text>
</comment>
<keyword id="KW-0131">Cell cycle</keyword>
<keyword id="KW-0132">Cell division</keyword>
<keyword id="KW-0175">Coiled coil</keyword>
<keyword id="KW-0963">Cytoplasm</keyword>
<keyword id="KW-0238">DNA-binding</keyword>
<keyword id="KW-1185">Reference proteome</keyword>
<reference key="1">
    <citation type="submission" date="2007-02" db="EMBL/GenBank/DDBJ databases">
        <title>Complete sequence of chromosome of Shewanella baltica OS155.</title>
        <authorList>
            <consortium name="US DOE Joint Genome Institute"/>
            <person name="Copeland A."/>
            <person name="Lucas S."/>
            <person name="Lapidus A."/>
            <person name="Barry K."/>
            <person name="Detter J.C."/>
            <person name="Glavina del Rio T."/>
            <person name="Hammon N."/>
            <person name="Israni S."/>
            <person name="Dalin E."/>
            <person name="Tice H."/>
            <person name="Pitluck S."/>
            <person name="Sims D.R."/>
            <person name="Brettin T."/>
            <person name="Bruce D."/>
            <person name="Han C."/>
            <person name="Tapia R."/>
            <person name="Brainard J."/>
            <person name="Schmutz J."/>
            <person name="Larimer F."/>
            <person name="Land M."/>
            <person name="Hauser L."/>
            <person name="Kyrpides N."/>
            <person name="Mikhailova N."/>
            <person name="Brettar I."/>
            <person name="Klappenbach J."/>
            <person name="Konstantinidis K."/>
            <person name="Rodrigues J."/>
            <person name="Tiedje J."/>
            <person name="Richardson P."/>
        </authorList>
    </citation>
    <scope>NUCLEOTIDE SEQUENCE [LARGE SCALE GENOMIC DNA]</scope>
    <source>
        <strain>OS155 / ATCC BAA-1091</strain>
    </source>
</reference>
<accession>A3CZJ3</accession>
<name>SLMA_SHEB5</name>
<sequence>MAVSPKINRREHILQCLAQMLETNPGQRITTAKLASEVGVSEAALYRHFPSKARMFEGLIEFIEESLLSRINLIMDDEKDTMKRCQLVLQLLLIFAERNPGISRVLNGDALLGENERLRSRISNLFAKIETQLKQILREKTLREGKGFNLDEAILANLLLAFAEGRIAQFVRSEFKLKPTTHFDEQWRFIQHQLLQS</sequence>
<feature type="chain" id="PRO_1000070525" description="Nucleoid occlusion factor SlmA">
    <location>
        <begin position="1"/>
        <end position="197"/>
    </location>
</feature>
<feature type="domain" description="HTH tetR-type" evidence="1">
    <location>
        <begin position="7"/>
        <end position="67"/>
    </location>
</feature>
<feature type="DNA-binding region" description="H-T-H motif" evidence="1">
    <location>
        <begin position="30"/>
        <end position="49"/>
    </location>
</feature>
<feature type="coiled-coil region" evidence="1">
    <location>
        <begin position="109"/>
        <end position="136"/>
    </location>
</feature>
<dbReference type="EMBL" id="CP000563">
    <property type="protein sequence ID" value="ABN59906.1"/>
    <property type="molecule type" value="Genomic_DNA"/>
</dbReference>
<dbReference type="RefSeq" id="WP_006079866.1">
    <property type="nucleotide sequence ID" value="NC_009052.1"/>
</dbReference>
<dbReference type="SMR" id="A3CZJ3"/>
<dbReference type="STRING" id="325240.Sbal_0374"/>
<dbReference type="GeneID" id="11770724"/>
<dbReference type="KEGG" id="sbl:Sbal_0374"/>
<dbReference type="HOGENOM" id="CLU_069356_5_0_6"/>
<dbReference type="OrthoDB" id="9179041at2"/>
<dbReference type="Proteomes" id="UP000001557">
    <property type="component" value="Chromosome"/>
</dbReference>
<dbReference type="GO" id="GO:0043590">
    <property type="term" value="C:bacterial nucleoid"/>
    <property type="evidence" value="ECO:0007669"/>
    <property type="project" value="UniProtKB-UniRule"/>
</dbReference>
<dbReference type="GO" id="GO:0005737">
    <property type="term" value="C:cytoplasm"/>
    <property type="evidence" value="ECO:0007669"/>
    <property type="project" value="UniProtKB-UniRule"/>
</dbReference>
<dbReference type="GO" id="GO:0043565">
    <property type="term" value="F:sequence-specific DNA binding"/>
    <property type="evidence" value="ECO:0007669"/>
    <property type="project" value="UniProtKB-UniRule"/>
</dbReference>
<dbReference type="GO" id="GO:0051301">
    <property type="term" value="P:cell division"/>
    <property type="evidence" value="ECO:0007669"/>
    <property type="project" value="UniProtKB-KW"/>
</dbReference>
<dbReference type="GO" id="GO:0010974">
    <property type="term" value="P:negative regulation of division septum assembly"/>
    <property type="evidence" value="ECO:0007669"/>
    <property type="project" value="InterPro"/>
</dbReference>
<dbReference type="Gene3D" id="1.10.357.10">
    <property type="entry name" value="Tetracycline Repressor, domain 2"/>
    <property type="match status" value="1"/>
</dbReference>
<dbReference type="HAMAP" id="MF_01839">
    <property type="entry name" value="NO_factor_SlmA"/>
    <property type="match status" value="1"/>
</dbReference>
<dbReference type="InterPro" id="IPR009057">
    <property type="entry name" value="Homeodomain-like_sf"/>
</dbReference>
<dbReference type="InterPro" id="IPR050624">
    <property type="entry name" value="HTH-type_Tx_Regulator"/>
</dbReference>
<dbReference type="InterPro" id="IPR001647">
    <property type="entry name" value="HTH_TetR"/>
</dbReference>
<dbReference type="InterPro" id="IPR023769">
    <property type="entry name" value="NO_SlmA"/>
</dbReference>
<dbReference type="InterPro" id="IPR054580">
    <property type="entry name" value="SlmA-like_C"/>
</dbReference>
<dbReference type="NCBIfam" id="NF007015">
    <property type="entry name" value="PRK09480.1"/>
    <property type="match status" value="1"/>
</dbReference>
<dbReference type="PANTHER" id="PTHR43479">
    <property type="entry name" value="ACREF/ENVCD OPERON REPRESSOR-RELATED"/>
    <property type="match status" value="1"/>
</dbReference>
<dbReference type="PANTHER" id="PTHR43479:SF11">
    <property type="entry name" value="ACREF_ENVCD OPERON REPRESSOR-RELATED"/>
    <property type="match status" value="1"/>
</dbReference>
<dbReference type="Pfam" id="PF22276">
    <property type="entry name" value="SlmA-like_C"/>
    <property type="match status" value="1"/>
</dbReference>
<dbReference type="Pfam" id="PF00440">
    <property type="entry name" value="TetR_N"/>
    <property type="match status" value="1"/>
</dbReference>
<dbReference type="SUPFAM" id="SSF46689">
    <property type="entry name" value="Homeodomain-like"/>
    <property type="match status" value="1"/>
</dbReference>
<dbReference type="PROSITE" id="PS50977">
    <property type="entry name" value="HTH_TETR_2"/>
    <property type="match status" value="1"/>
</dbReference>
<proteinExistence type="inferred from homology"/>
<organism>
    <name type="scientific">Shewanella baltica (strain OS155 / ATCC BAA-1091)</name>
    <dbReference type="NCBI Taxonomy" id="325240"/>
    <lineage>
        <taxon>Bacteria</taxon>
        <taxon>Pseudomonadati</taxon>
        <taxon>Pseudomonadota</taxon>
        <taxon>Gammaproteobacteria</taxon>
        <taxon>Alteromonadales</taxon>
        <taxon>Shewanellaceae</taxon>
        <taxon>Shewanella</taxon>
    </lineage>
</organism>
<protein>
    <recommendedName>
        <fullName evidence="1">Nucleoid occlusion factor SlmA</fullName>
    </recommendedName>
</protein>
<evidence type="ECO:0000255" key="1">
    <source>
        <dbReference type="HAMAP-Rule" id="MF_01839"/>
    </source>
</evidence>